<name>PACA_ONCNE</name>
<sequence length="173" mass="19704">MSSKATLALLIYGIIMHYSVYSSPLGLNYPNLRLENEVYDEDGNSLPALAFDSDQIAIRSPPSVADDLYTLYYPPEKGTERHADGMFNKAYRKALGQLSARKYLHSLMAKRVGGGSTMEDDTEPLSKRHSDGIFTDSYSRYRKQMAVKKYLAAVLGKRYRQRYRNKGRRLGYL</sequence>
<feature type="signal peptide" evidence="1">
    <location>
        <begin position="1"/>
        <end position="22"/>
    </location>
</feature>
<feature type="propeptide" id="PRO_0000011525">
    <location>
        <begin position="23"/>
        <end position="80"/>
    </location>
</feature>
<feature type="peptide" id="PRO_0000011526" description="Growth hormone-releasing factor">
    <location>
        <begin position="82"/>
        <end position="126"/>
    </location>
</feature>
<feature type="peptide" id="PRO_0000011527" description="Pituitary adenylate cyclase-activating polypeptide">
    <location>
        <begin position="129"/>
        <end position="166"/>
    </location>
</feature>
<feature type="propeptide" id="PRO_0000011528">
    <location>
        <begin position="170"/>
        <end position="173"/>
    </location>
</feature>
<feature type="modified residue" description="Lysine amide" evidence="1">
    <location>
        <position position="166"/>
    </location>
</feature>
<feature type="splice variant" id="VSP_001762" description="In isoform Short." evidence="2">
    <original>G</original>
    <variation>S</variation>
    <location>
        <position position="78"/>
    </location>
</feature>
<feature type="splice variant" id="VSP_001763" description="In isoform Short." evidence="2">
    <location>
        <begin position="79"/>
        <end position="113"/>
    </location>
</feature>
<feature type="sequence variant">
    <original>S</original>
    <variation>C</variation>
    <location>
        <position position="22"/>
    </location>
</feature>
<feature type="sequence variant">
    <original>P</original>
    <variation>S</variation>
    <location>
        <position position="61"/>
    </location>
</feature>
<feature type="sequence variant">
    <original>G</original>
    <variation>R</variation>
    <location>
        <position position="78"/>
    </location>
</feature>
<feature type="sequence variant">
    <original>T</original>
    <variation>S</variation>
    <location>
        <position position="122"/>
    </location>
</feature>
<feature type="sequence variant">
    <original>N</original>
    <variation>S</variation>
    <location>
        <position position="165"/>
    </location>
</feature>
<feature type="sequence variant">
    <original>G</original>
    <variation>A</variation>
    <location>
        <position position="171"/>
    </location>
</feature>
<accession>P41585</accession>
<reference key="1">
    <citation type="journal article" date="1993" name="Eur. J. Biochem.">
        <title>Two salmon neuropeptides encoded by one brain cDNA are structurally related to members of the glucagon superfamily.</title>
        <authorList>
            <person name="Parker D.B."/>
            <person name="Coe I.R."/>
            <person name="Dixon G.H."/>
            <person name="Sherwood N.M."/>
        </authorList>
    </citation>
    <scope>NUCLEOTIDE SEQUENCE [MRNA]</scope>
    <scope>ALTERNATIVE SPLICING</scope>
    <source>
        <tissue>Brain</tissue>
    </source>
</reference>
<proteinExistence type="evidence at transcript level"/>
<evidence type="ECO:0000255" key="1"/>
<evidence type="ECO:0000305" key="2"/>
<protein>
    <recommendedName>
        <fullName>Glucagon family neuropeptides</fullName>
    </recommendedName>
    <component>
        <recommendedName>
            <fullName>Growth hormone-releasing factor</fullName>
            <shortName>GRF</shortName>
        </recommendedName>
        <alternativeName>
            <fullName>Growth hormone-releasing hormone</fullName>
            <shortName>GHRH</shortName>
        </alternativeName>
    </component>
    <component>
        <recommendedName>
            <fullName>Pituitary adenylate cyclase-activating polypeptide</fullName>
            <shortName>PACAP</shortName>
        </recommendedName>
    </component>
</protein>
<keyword id="KW-0025">Alternative splicing</keyword>
<keyword id="KW-0027">Amidation</keyword>
<keyword id="KW-0165">Cleavage on pair of basic residues</keyword>
<keyword id="KW-0372">Hormone</keyword>
<keyword id="KW-0964">Secreted</keyword>
<keyword id="KW-0732">Signal</keyword>
<dbReference type="EMBL" id="X73233">
    <property type="protein sequence ID" value="CAA51705.1"/>
    <property type="status" value="ALT_SEQ"/>
    <property type="molecule type" value="mRNA"/>
</dbReference>
<dbReference type="PIR" id="S34767">
    <property type="entry name" value="S34767"/>
</dbReference>
<dbReference type="SMR" id="P41585"/>
<dbReference type="GO" id="GO:0005576">
    <property type="term" value="C:extracellular region"/>
    <property type="evidence" value="ECO:0007669"/>
    <property type="project" value="UniProtKB-SubCell"/>
</dbReference>
<dbReference type="GO" id="GO:0043005">
    <property type="term" value="C:neuron projection"/>
    <property type="evidence" value="ECO:0007669"/>
    <property type="project" value="TreeGrafter"/>
</dbReference>
<dbReference type="GO" id="GO:0043204">
    <property type="term" value="C:perikaryon"/>
    <property type="evidence" value="ECO:0007669"/>
    <property type="project" value="TreeGrafter"/>
</dbReference>
<dbReference type="GO" id="GO:0005184">
    <property type="term" value="F:neuropeptide hormone activity"/>
    <property type="evidence" value="ECO:0007669"/>
    <property type="project" value="InterPro"/>
</dbReference>
<dbReference type="GO" id="GO:0051428">
    <property type="term" value="F:peptide hormone receptor binding"/>
    <property type="evidence" value="ECO:0007669"/>
    <property type="project" value="TreeGrafter"/>
</dbReference>
<dbReference type="GO" id="GO:0016521">
    <property type="term" value="F:pituitary adenylate cyclase activating polypeptide activity"/>
    <property type="evidence" value="ECO:0007669"/>
    <property type="project" value="TreeGrafter"/>
</dbReference>
<dbReference type="GO" id="GO:0007189">
    <property type="term" value="P:adenylate cyclase-activating G protein-coupled receptor signaling pathway"/>
    <property type="evidence" value="ECO:0007669"/>
    <property type="project" value="TreeGrafter"/>
</dbReference>
<dbReference type="GO" id="GO:0031175">
    <property type="term" value="P:neuron projection development"/>
    <property type="evidence" value="ECO:0007669"/>
    <property type="project" value="TreeGrafter"/>
</dbReference>
<dbReference type="GO" id="GO:0007218">
    <property type="term" value="P:neuropeptide signaling pathway"/>
    <property type="evidence" value="ECO:0007669"/>
    <property type="project" value="TreeGrafter"/>
</dbReference>
<dbReference type="GO" id="GO:0070374">
    <property type="term" value="P:positive regulation of ERK1 and ERK2 cascade"/>
    <property type="evidence" value="ECO:0007669"/>
    <property type="project" value="TreeGrafter"/>
</dbReference>
<dbReference type="GO" id="GO:0032880">
    <property type="term" value="P:regulation of protein localization"/>
    <property type="evidence" value="ECO:0007669"/>
    <property type="project" value="TreeGrafter"/>
</dbReference>
<dbReference type="Gene3D" id="6.10.250.590">
    <property type="match status" value="1"/>
</dbReference>
<dbReference type="InterPro" id="IPR000532">
    <property type="entry name" value="Glucagon_GIP_secretin_VIP"/>
</dbReference>
<dbReference type="InterPro" id="IPR046963">
    <property type="entry name" value="VIP/GHRH-like"/>
</dbReference>
<dbReference type="PANTHER" id="PTHR11213">
    <property type="entry name" value="GLUCAGON-FAMILY NEUROPEPTIDE"/>
    <property type="match status" value="1"/>
</dbReference>
<dbReference type="PANTHER" id="PTHR11213:SF1">
    <property type="entry name" value="PITUITARY ADENYLATE CYCLASE-ACTIVATING POLYPEPTIDE"/>
    <property type="match status" value="1"/>
</dbReference>
<dbReference type="Pfam" id="PF00123">
    <property type="entry name" value="Hormone_2"/>
    <property type="match status" value="2"/>
</dbReference>
<dbReference type="PRINTS" id="PR00275">
    <property type="entry name" value="GLUCAGON"/>
</dbReference>
<dbReference type="SMART" id="SM00070">
    <property type="entry name" value="GLUCA"/>
    <property type="match status" value="2"/>
</dbReference>
<dbReference type="PROSITE" id="PS00260">
    <property type="entry name" value="GLUCAGON"/>
    <property type="match status" value="2"/>
</dbReference>
<comment type="function">
    <text>Primary role of GHRH is to release GH from the pituitary.</text>
</comment>
<comment type="function">
    <text>PACAP plays pivotal roles as a neurotransmitter and/or a neuromodulator.</text>
</comment>
<comment type="subcellular location">
    <subcellularLocation>
        <location>Secreted</location>
    </subcellularLocation>
</comment>
<comment type="alternative products">
    <event type="alternative splicing"/>
    <isoform>
        <id>P41585-1</id>
        <name>Long</name>
        <sequence type="displayed"/>
    </isoform>
    <isoform>
        <id>P41585-2</id>
        <name>Short</name>
        <sequence type="described" ref="VSP_001762 VSP_001763"/>
    </isoform>
</comment>
<comment type="miscellaneous">
    <molecule>Isoform Short</molecule>
    <text evidence="2">Lacks the GHRH-like sequence.</text>
</comment>
<comment type="similarity">
    <text evidence="2">Belongs to the glucagon family.</text>
</comment>
<organism>
    <name type="scientific">Oncorhynchus nerka</name>
    <name type="common">Sockeye salmon</name>
    <name type="synonym">Salmo nerka</name>
    <dbReference type="NCBI Taxonomy" id="8023"/>
    <lineage>
        <taxon>Eukaryota</taxon>
        <taxon>Metazoa</taxon>
        <taxon>Chordata</taxon>
        <taxon>Craniata</taxon>
        <taxon>Vertebrata</taxon>
        <taxon>Euteleostomi</taxon>
        <taxon>Actinopterygii</taxon>
        <taxon>Neopterygii</taxon>
        <taxon>Teleostei</taxon>
        <taxon>Protacanthopterygii</taxon>
        <taxon>Salmoniformes</taxon>
        <taxon>Salmonidae</taxon>
        <taxon>Salmoninae</taxon>
        <taxon>Oncorhynchus</taxon>
    </lineage>
</organism>